<sequence>MSLVRLAHELPIEAPRTAWLDSIIKGDCVSALERLPDHSVDVIFADPPYNLQLGGDLHRPDQSMVSAVDDHWDQFESFQAYDAFTRAWLLACRRVLKPNGTIWVIGSYHNIFRVGTQLQDLGFWLLNDIVWRKTNPMPNFRGRRFQNAHETLIWASREQKGKGYTFNYEAMKAANDDVQMRSDWLFPICTGSERLKDENGDKVHPTQKPEALLARIMMASSKPGDVILDPFFGSGTTGAVAKRLGRHFVGIEREQPYIDAATARINAVEPLGKAELTVMTGKRAEPRVAFTSVMEAGLLRPGTVLCDERRRFAAIVRADGTLTANGEAGSIHRIGARVQGFDACNGWTFWHFEENGVLKPIDALRKIIREQMAAAGA</sequence>
<reference key="1">
    <citation type="journal article" date="1997" name="J. Bacteriol.">
        <title>The CcrM DNA methyltransferase is widespread in the alpha subdivision of proteobacteria, and its essential functions are conserved in Rhizobium meliloti and Caulobacter crescentus.</title>
        <authorList>
            <person name="Wright R."/>
            <person name="Stephens C."/>
            <person name="Shapiro L."/>
        </authorList>
    </citation>
    <scope>NUCLEOTIDE SEQUENCE [GENOMIC DNA]</scope>
    <source>
        <strain>2308</strain>
    </source>
</reference>
<reference key="2">
    <citation type="journal article" date="2005" name="Infect. Immun.">
        <title>Whole-genome analyses of speciation events in pathogenic Brucellae.</title>
        <authorList>
            <person name="Chain P.S."/>
            <person name="Comerci D.J."/>
            <person name="Tolmasky M.E."/>
            <person name="Larimer F.W."/>
            <person name="Malfatti S.A."/>
            <person name="Vergez L.M."/>
            <person name="Aguero F."/>
            <person name="Land M.L."/>
            <person name="Ugalde R.A."/>
            <person name="Garcia E."/>
        </authorList>
    </citation>
    <scope>NUCLEOTIDE SEQUENCE [LARGE SCALE GENOMIC DNA]</scope>
    <source>
        <strain>2308</strain>
    </source>
</reference>
<reference key="3">
    <citation type="journal article" date="2000" name="J. Bacteriol.">
        <title>The Brucella abortus CcrM DNA methyltransferase is essential for viability, and its overexpression attenuates intracellular replication in murine macrophages.</title>
        <authorList>
            <person name="Robertson G.T."/>
            <person name="Reisenauer A."/>
            <person name="Wright R."/>
            <person name="Jensen R.B."/>
            <person name="Jensen A."/>
            <person name="Shapiro L."/>
            <person name="Roop R.M. II"/>
        </authorList>
    </citation>
    <scope>FUNCTION</scope>
    <scope>IMPORTANCE IN VIABILITY</scope>
    <scope>INDUCTION</scope>
    <scope>TRANSCRIPTIONAL CONTROL BY CTRA</scope>
    <scope>DISRUPTION PHENOTYPE</scope>
    <source>
        <strain>2308</strain>
    </source>
</reference>
<reference key="4">
    <citation type="journal article" date="2003" name="Nucleic Acids Res.">
        <title>A nomenclature for restriction enzymes, DNA methyltransferases, homing endonucleases and their genes.</title>
        <authorList>
            <person name="Roberts R.J."/>
            <person name="Belfort M."/>
            <person name="Bestor T."/>
            <person name="Bhagwat A.S."/>
            <person name="Bickle T.A."/>
            <person name="Bitinaite J."/>
            <person name="Blumenthal R.M."/>
            <person name="Degtyarev S.K."/>
            <person name="Dryden D.T."/>
            <person name="Dybvig K."/>
            <person name="Firman K."/>
            <person name="Gromova E.S."/>
            <person name="Gumport R.I."/>
            <person name="Halford S.E."/>
            <person name="Hattman S."/>
            <person name="Heitman J."/>
            <person name="Hornby D.P."/>
            <person name="Janulaitis A."/>
            <person name="Jeltsch A."/>
            <person name="Josephsen J."/>
            <person name="Kiss A."/>
            <person name="Klaenhammer T.R."/>
            <person name="Kobayashi I."/>
            <person name="Kong H."/>
            <person name="Krueger D.H."/>
            <person name="Lacks S."/>
            <person name="Marinus M.G."/>
            <person name="Miyahara M."/>
            <person name="Morgan R.D."/>
            <person name="Murray N.E."/>
            <person name="Nagaraja V."/>
            <person name="Piekarowicz A."/>
            <person name="Pingoud A."/>
            <person name="Raleigh E."/>
            <person name="Rao D.N."/>
            <person name="Reich N."/>
            <person name="Repin V.E."/>
            <person name="Selker E.U."/>
            <person name="Shaw P.C."/>
            <person name="Stein D.C."/>
            <person name="Stoddard B.L."/>
            <person name="Szybalski W."/>
            <person name="Trautner T.A."/>
            <person name="Van Etten J.L."/>
            <person name="Vitor J.M."/>
            <person name="Wilson G.G."/>
            <person name="Xu S.Y."/>
        </authorList>
    </citation>
    <scope>NOMENCLATURE</scope>
    <scope>SUBTYPE</scope>
</reference>
<gene>
    <name evidence="6" type="primary">ccrM</name>
    <name type="synonym">babI</name>
    <name type="synonym">babIM</name>
    <name type="ordered locus">BAB1_0516</name>
</gene>
<organism>
    <name type="scientific">Brucella abortus (strain 2308)</name>
    <dbReference type="NCBI Taxonomy" id="359391"/>
    <lineage>
        <taxon>Bacteria</taxon>
        <taxon>Pseudomonadati</taxon>
        <taxon>Pseudomonadota</taxon>
        <taxon>Alphaproteobacteria</taxon>
        <taxon>Hyphomicrobiales</taxon>
        <taxon>Brucellaceae</taxon>
        <taxon>Brucella/Ochrobactrum group</taxon>
        <taxon>Brucella</taxon>
    </lineage>
</organism>
<keyword id="KW-0235">DNA replication</keyword>
<keyword id="KW-0238">DNA-binding</keyword>
<keyword id="KW-0489">Methyltransferase</keyword>
<keyword id="KW-1185">Reference proteome</keyword>
<keyword id="KW-0949">S-adenosyl-L-methionine</keyword>
<keyword id="KW-0808">Transferase</keyword>
<name>CCRM_BRUA2</name>
<comment type="function">
    <text evidence="1 3 5">A beta subtype methylase that recognizes the double-stranded sequence 5'-GANTC-3' and methylates on A-2 on both strands (By similarity) (PubMed:12654995). Overexpression from a moderate-copy number plasmid (10-12 copies/cell) leads to enlarged, branched cells, many with 3-5 genome equivalents. Contributes to the accurate cell-cycle control of DNA replication and cellular morphology (PubMed:10852881).</text>
</comment>
<comment type="catalytic activity">
    <reaction>
        <text>a 2'-deoxyadenosine in DNA + S-adenosyl-L-methionine = an N(6)-methyl-2'-deoxyadenosine in DNA + S-adenosyl-L-homocysteine + H(+)</text>
        <dbReference type="Rhea" id="RHEA:15197"/>
        <dbReference type="Rhea" id="RHEA-COMP:12418"/>
        <dbReference type="Rhea" id="RHEA-COMP:12419"/>
        <dbReference type="ChEBI" id="CHEBI:15378"/>
        <dbReference type="ChEBI" id="CHEBI:57856"/>
        <dbReference type="ChEBI" id="CHEBI:59789"/>
        <dbReference type="ChEBI" id="CHEBI:90615"/>
        <dbReference type="ChEBI" id="CHEBI:90616"/>
        <dbReference type="EC" id="2.1.1.72"/>
    </reaction>
</comment>
<comment type="induction">
    <text evidence="4">By CtrA.</text>
</comment>
<comment type="disruption phenotype">
    <text evidence="3">Essential, it cannot be disrupted.</text>
</comment>
<comment type="similarity">
    <text evidence="7">Belongs to the N(4)/N(6)-methyltransferase family.</text>
</comment>
<accession>Q2YMK2</accession>
<accession>O30570</accession>
<accession>Q57EN0</accession>
<evidence type="ECO:0000250" key="1">
    <source>
        <dbReference type="UniProtKB" id="O30569"/>
    </source>
</evidence>
<evidence type="ECO:0000255" key="2"/>
<evidence type="ECO:0000269" key="3">
    <source>
    </source>
</evidence>
<evidence type="ECO:0000269" key="4">
    <source>
    </source>
</evidence>
<evidence type="ECO:0000303" key="5">
    <source>
    </source>
</evidence>
<evidence type="ECO:0000303" key="6">
    <source>
    </source>
</evidence>
<evidence type="ECO:0000305" key="7"/>
<protein>
    <recommendedName>
        <fullName evidence="6">DNA methyltransferase CcrM</fullName>
        <shortName>M.CcrM</shortName>
        <ecNumber>2.1.1.72</ecNumber>
    </recommendedName>
    <alternativeName>
        <fullName>Adenine-specific methyltransferase BabI</fullName>
    </alternativeName>
    <alternativeName>
        <fullName evidence="5">Orphan methyltransferase M.BabI</fullName>
        <shortName evidence="5">M.BabI</shortName>
    </alternativeName>
</protein>
<dbReference type="EC" id="2.1.1.72"/>
<dbReference type="EMBL" id="AF011895">
    <property type="protein sequence ID" value="AAB71351.1"/>
    <property type="molecule type" value="Genomic_DNA"/>
</dbReference>
<dbReference type="EMBL" id="AM040264">
    <property type="protein sequence ID" value="CAJ10472.1"/>
    <property type="molecule type" value="Genomic_DNA"/>
</dbReference>
<dbReference type="RefSeq" id="WP_002969465.1">
    <property type="nucleotide sequence ID" value="NZ_KN046823.1"/>
</dbReference>
<dbReference type="SMR" id="Q2YMK2"/>
<dbReference type="STRING" id="359391.BAB1_0516"/>
<dbReference type="REBASE" id="11592">
    <property type="entry name" value="M.BmeAORF516P"/>
</dbReference>
<dbReference type="REBASE" id="3263">
    <property type="entry name" value="M.BabI"/>
</dbReference>
<dbReference type="KEGG" id="bmf:BAB1_0516"/>
<dbReference type="PATRIC" id="fig|359391.11.peg.2554"/>
<dbReference type="HOGENOM" id="CLU_024927_5_1_5"/>
<dbReference type="Proteomes" id="UP000002719">
    <property type="component" value="Chromosome I"/>
</dbReference>
<dbReference type="GO" id="GO:0005737">
    <property type="term" value="C:cytoplasm"/>
    <property type="evidence" value="ECO:0007669"/>
    <property type="project" value="TreeGrafter"/>
</dbReference>
<dbReference type="GO" id="GO:0003677">
    <property type="term" value="F:DNA binding"/>
    <property type="evidence" value="ECO:0007669"/>
    <property type="project" value="UniProtKB-KW"/>
</dbReference>
<dbReference type="GO" id="GO:0008170">
    <property type="term" value="F:N-methyltransferase activity"/>
    <property type="evidence" value="ECO:0007669"/>
    <property type="project" value="InterPro"/>
</dbReference>
<dbReference type="GO" id="GO:0009007">
    <property type="term" value="F:site-specific DNA-methyltransferase (adenine-specific) activity"/>
    <property type="evidence" value="ECO:0007669"/>
    <property type="project" value="UniProtKB-EC"/>
</dbReference>
<dbReference type="GO" id="GO:0006260">
    <property type="term" value="P:DNA replication"/>
    <property type="evidence" value="ECO:0007669"/>
    <property type="project" value="UniProtKB-KW"/>
</dbReference>
<dbReference type="GO" id="GO:0032259">
    <property type="term" value="P:methylation"/>
    <property type="evidence" value="ECO:0007669"/>
    <property type="project" value="UniProtKB-KW"/>
</dbReference>
<dbReference type="FunFam" id="3.40.50.150:FF:000276">
    <property type="entry name" value="Methyltransferase"/>
    <property type="match status" value="1"/>
</dbReference>
<dbReference type="Gene3D" id="3.40.50.150">
    <property type="entry name" value="Vaccinia Virus protein VP39"/>
    <property type="match status" value="1"/>
</dbReference>
<dbReference type="InterPro" id="IPR002941">
    <property type="entry name" value="DNA_methylase_N4/N6"/>
</dbReference>
<dbReference type="InterPro" id="IPR002052">
    <property type="entry name" value="DNA_methylase_N6_adenine_CS"/>
</dbReference>
<dbReference type="InterPro" id="IPR040843">
    <property type="entry name" value="RAMA"/>
</dbReference>
<dbReference type="InterPro" id="IPR001091">
    <property type="entry name" value="RM_Methyltransferase"/>
</dbReference>
<dbReference type="InterPro" id="IPR029063">
    <property type="entry name" value="SAM-dependent_MTases_sf"/>
</dbReference>
<dbReference type="PANTHER" id="PTHR13370">
    <property type="entry name" value="RNA METHYLASE-RELATED"/>
    <property type="match status" value="1"/>
</dbReference>
<dbReference type="PANTHER" id="PTHR13370:SF3">
    <property type="entry name" value="TRNA (GUANINE(10)-N2)-METHYLTRANSFERASE HOMOLOG"/>
    <property type="match status" value="1"/>
</dbReference>
<dbReference type="Pfam" id="PF01555">
    <property type="entry name" value="N6_N4_Mtase"/>
    <property type="match status" value="1"/>
</dbReference>
<dbReference type="Pfam" id="PF18755">
    <property type="entry name" value="RAMA"/>
    <property type="match status" value="1"/>
</dbReference>
<dbReference type="PRINTS" id="PR00508">
    <property type="entry name" value="S21N4MTFRASE"/>
</dbReference>
<dbReference type="SUPFAM" id="SSF53335">
    <property type="entry name" value="S-adenosyl-L-methionine-dependent methyltransferases"/>
    <property type="match status" value="1"/>
</dbReference>
<dbReference type="PROSITE" id="PS00092">
    <property type="entry name" value="N6_MTASE"/>
    <property type="match status" value="1"/>
</dbReference>
<proteinExistence type="evidence at transcript level"/>
<feature type="chain" id="PRO_0000087986" description="DNA methyltransferase CcrM">
    <location>
        <begin position="1"/>
        <end position="377"/>
    </location>
</feature>
<feature type="domain" description="RAMA" evidence="2">
    <location>
        <begin position="271"/>
        <end position="373"/>
    </location>
</feature>